<feature type="initiator methionine" description="Removed" evidence="1">
    <location>
        <position position="1"/>
    </location>
</feature>
<feature type="chain" id="PRO_0000146017" description="Phosphoglycerate kinase">
    <location>
        <begin position="2"/>
        <end position="398"/>
    </location>
</feature>
<feature type="binding site" evidence="1">
    <location>
        <begin position="21"/>
        <end position="23"/>
    </location>
    <ligand>
        <name>substrate</name>
    </ligand>
</feature>
<feature type="binding site" evidence="1">
    <location>
        <position position="36"/>
    </location>
    <ligand>
        <name>substrate</name>
    </ligand>
</feature>
<feature type="binding site" evidence="1">
    <location>
        <begin position="59"/>
        <end position="62"/>
    </location>
    <ligand>
        <name>substrate</name>
    </ligand>
</feature>
<feature type="binding site" evidence="1">
    <location>
        <position position="119"/>
    </location>
    <ligand>
        <name>substrate</name>
    </ligand>
</feature>
<feature type="binding site" evidence="1">
    <location>
        <position position="157"/>
    </location>
    <ligand>
        <name>substrate</name>
    </ligand>
</feature>
<feature type="binding site" evidence="1">
    <location>
        <position position="208"/>
    </location>
    <ligand>
        <name>ATP</name>
        <dbReference type="ChEBI" id="CHEBI:30616"/>
    </ligand>
</feature>
<feature type="binding site" evidence="1">
    <location>
        <position position="296"/>
    </location>
    <ligand>
        <name>ATP</name>
        <dbReference type="ChEBI" id="CHEBI:30616"/>
    </ligand>
</feature>
<feature type="binding site" evidence="1">
    <location>
        <position position="327"/>
    </location>
    <ligand>
        <name>ATP</name>
        <dbReference type="ChEBI" id="CHEBI:30616"/>
    </ligand>
</feature>
<feature type="binding site" evidence="1">
    <location>
        <begin position="354"/>
        <end position="357"/>
    </location>
    <ligand>
        <name>ATP</name>
        <dbReference type="ChEBI" id="CHEBI:30616"/>
    </ligand>
</feature>
<gene>
    <name type="primary">pgk</name>
    <name type="ordered locus">SPy_1881</name>
    <name type="ordered locus">M5005_Spy1599</name>
</gene>
<sequence length="398" mass="42130">MAKLTVKDVDLKGKKVLVRVDFNVPLKDGVITNDNRITAALPTIKYIIEQGGRAILFSHLGRVKEEADKEGKSLAPVAADLAAKLGQDVVFPGVTRGSKLEEAINALEDGQVLLVENTRFEDVDGKKESKNDEELGKYWASLGDGIFVNDAFGTAHRAHASNVGISANVEKAVAGFLLENEIAYIQEAVETPERPFVAILGGSKVSDKIGVIENLLEKADKVLIGGGMTYTFYKAQGIEIGNSLVEEDKLDVAKDLLEKSNGKLILPVDSKEANAFAGYTEVRDTEGEAVSEGFLGLDIGPKSIAEFDQALTGAKTVVWNGPMGVFENPDFQAGTIGVMDAIVKQPGVKSIIGGGDSAAAAINLGRADKFSWISTGGGASMELLEGKVLPGLAALTEK</sequence>
<dbReference type="EC" id="2.7.2.3"/>
<dbReference type="EMBL" id="AE004092">
    <property type="protein sequence ID" value="AAK34594.1"/>
    <property type="molecule type" value="Genomic_DNA"/>
</dbReference>
<dbReference type="EMBL" id="CP000017">
    <property type="protein sequence ID" value="AAZ52217.1"/>
    <property type="molecule type" value="Genomic_DNA"/>
</dbReference>
<dbReference type="RefSeq" id="NP_269873.1">
    <property type="nucleotide sequence ID" value="NC_002737.2"/>
</dbReference>
<dbReference type="SMR" id="P68897"/>
<dbReference type="PaxDb" id="1314-HKU360_01719"/>
<dbReference type="KEGG" id="spy:SPy_1881"/>
<dbReference type="KEGG" id="spz:M5005_Spy1599"/>
<dbReference type="PATRIC" id="fig|160490.10.peg.1633"/>
<dbReference type="HOGENOM" id="CLU_025427_0_1_9"/>
<dbReference type="OMA" id="DMIFDIG"/>
<dbReference type="UniPathway" id="UPA00109">
    <property type="reaction ID" value="UER00185"/>
</dbReference>
<dbReference type="Proteomes" id="UP000000750">
    <property type="component" value="Chromosome"/>
</dbReference>
<dbReference type="GO" id="GO:0005829">
    <property type="term" value="C:cytosol"/>
    <property type="evidence" value="ECO:0007669"/>
    <property type="project" value="TreeGrafter"/>
</dbReference>
<dbReference type="GO" id="GO:0043531">
    <property type="term" value="F:ADP binding"/>
    <property type="evidence" value="ECO:0007669"/>
    <property type="project" value="TreeGrafter"/>
</dbReference>
<dbReference type="GO" id="GO:0005524">
    <property type="term" value="F:ATP binding"/>
    <property type="evidence" value="ECO:0007669"/>
    <property type="project" value="UniProtKB-KW"/>
</dbReference>
<dbReference type="GO" id="GO:0004618">
    <property type="term" value="F:phosphoglycerate kinase activity"/>
    <property type="evidence" value="ECO:0007669"/>
    <property type="project" value="UniProtKB-UniRule"/>
</dbReference>
<dbReference type="GO" id="GO:0006094">
    <property type="term" value="P:gluconeogenesis"/>
    <property type="evidence" value="ECO:0007669"/>
    <property type="project" value="TreeGrafter"/>
</dbReference>
<dbReference type="GO" id="GO:0006096">
    <property type="term" value="P:glycolytic process"/>
    <property type="evidence" value="ECO:0007669"/>
    <property type="project" value="UniProtKB-UniRule"/>
</dbReference>
<dbReference type="FunFam" id="3.40.50.1260:FF:000001">
    <property type="entry name" value="Phosphoglycerate kinase"/>
    <property type="match status" value="1"/>
</dbReference>
<dbReference type="FunFam" id="3.40.50.1260:FF:000008">
    <property type="entry name" value="Phosphoglycerate kinase"/>
    <property type="match status" value="1"/>
</dbReference>
<dbReference type="Gene3D" id="3.40.50.1260">
    <property type="entry name" value="Phosphoglycerate kinase, N-terminal domain"/>
    <property type="match status" value="2"/>
</dbReference>
<dbReference type="HAMAP" id="MF_00145">
    <property type="entry name" value="Phosphoglyc_kinase"/>
    <property type="match status" value="1"/>
</dbReference>
<dbReference type="InterPro" id="IPR001576">
    <property type="entry name" value="Phosphoglycerate_kinase"/>
</dbReference>
<dbReference type="InterPro" id="IPR015911">
    <property type="entry name" value="Phosphoglycerate_kinase_CS"/>
</dbReference>
<dbReference type="InterPro" id="IPR015824">
    <property type="entry name" value="Phosphoglycerate_kinase_N"/>
</dbReference>
<dbReference type="InterPro" id="IPR036043">
    <property type="entry name" value="Phosphoglycerate_kinase_sf"/>
</dbReference>
<dbReference type="PANTHER" id="PTHR11406">
    <property type="entry name" value="PHOSPHOGLYCERATE KINASE"/>
    <property type="match status" value="1"/>
</dbReference>
<dbReference type="PANTHER" id="PTHR11406:SF23">
    <property type="entry name" value="PHOSPHOGLYCERATE KINASE 1, CHLOROPLASTIC-RELATED"/>
    <property type="match status" value="1"/>
</dbReference>
<dbReference type="Pfam" id="PF00162">
    <property type="entry name" value="PGK"/>
    <property type="match status" value="1"/>
</dbReference>
<dbReference type="PIRSF" id="PIRSF000724">
    <property type="entry name" value="Pgk"/>
    <property type="match status" value="1"/>
</dbReference>
<dbReference type="PRINTS" id="PR00477">
    <property type="entry name" value="PHGLYCKINASE"/>
</dbReference>
<dbReference type="SUPFAM" id="SSF53748">
    <property type="entry name" value="Phosphoglycerate kinase"/>
    <property type="match status" value="1"/>
</dbReference>
<dbReference type="PROSITE" id="PS00111">
    <property type="entry name" value="PGLYCERATE_KINASE"/>
    <property type="match status" value="1"/>
</dbReference>
<evidence type="ECO:0000250" key="1"/>
<evidence type="ECO:0000305" key="2"/>
<keyword id="KW-0067">ATP-binding</keyword>
<keyword id="KW-0963">Cytoplasm</keyword>
<keyword id="KW-0324">Glycolysis</keyword>
<keyword id="KW-0418">Kinase</keyword>
<keyword id="KW-0547">Nucleotide-binding</keyword>
<keyword id="KW-1185">Reference proteome</keyword>
<keyword id="KW-0808">Transferase</keyword>
<reference key="1">
    <citation type="journal article" date="2001" name="Proc. Natl. Acad. Sci. U.S.A.">
        <title>Complete genome sequence of an M1 strain of Streptococcus pyogenes.</title>
        <authorList>
            <person name="Ferretti J.J."/>
            <person name="McShan W.M."/>
            <person name="Ajdic D.J."/>
            <person name="Savic D.J."/>
            <person name="Savic G."/>
            <person name="Lyon K."/>
            <person name="Primeaux C."/>
            <person name="Sezate S."/>
            <person name="Suvorov A.N."/>
            <person name="Kenton S."/>
            <person name="Lai H.S."/>
            <person name="Lin S.P."/>
            <person name="Qian Y."/>
            <person name="Jia H.G."/>
            <person name="Najar F.Z."/>
            <person name="Ren Q."/>
            <person name="Zhu H."/>
            <person name="Song L."/>
            <person name="White J."/>
            <person name="Yuan X."/>
            <person name="Clifton S.W."/>
            <person name="Roe B.A."/>
            <person name="McLaughlin R.E."/>
        </authorList>
    </citation>
    <scope>NUCLEOTIDE SEQUENCE [LARGE SCALE GENOMIC DNA]</scope>
    <source>
        <strain>ATCC 700294 / SF370 / Serotype M1</strain>
    </source>
</reference>
<reference key="2">
    <citation type="journal article" date="2005" name="J. Infect. Dis.">
        <title>Evolutionary origin and emergence of a highly successful clone of serotype M1 group A Streptococcus involved multiple horizontal gene transfer events.</title>
        <authorList>
            <person name="Sumby P."/>
            <person name="Porcella S.F."/>
            <person name="Madrigal A.G."/>
            <person name="Barbian K.D."/>
            <person name="Virtaneva K."/>
            <person name="Ricklefs S.M."/>
            <person name="Sturdevant D.E."/>
            <person name="Graham M.R."/>
            <person name="Vuopio-Varkila J."/>
            <person name="Hoe N.P."/>
            <person name="Musser J.M."/>
        </authorList>
    </citation>
    <scope>NUCLEOTIDE SEQUENCE [LARGE SCALE GENOMIC DNA]</scope>
    <source>
        <strain>ATCC BAA-947 / MGAS5005 / Serotype M1</strain>
    </source>
</reference>
<protein>
    <recommendedName>
        <fullName>Phosphoglycerate kinase</fullName>
        <ecNumber>2.7.2.3</ecNumber>
    </recommendedName>
</protein>
<accession>P68897</accession>
<accession>P82487</accession>
<accession>Q48WQ8</accession>
<comment type="catalytic activity">
    <reaction>
        <text>(2R)-3-phosphoglycerate + ATP = (2R)-3-phospho-glyceroyl phosphate + ADP</text>
        <dbReference type="Rhea" id="RHEA:14801"/>
        <dbReference type="ChEBI" id="CHEBI:30616"/>
        <dbReference type="ChEBI" id="CHEBI:57604"/>
        <dbReference type="ChEBI" id="CHEBI:58272"/>
        <dbReference type="ChEBI" id="CHEBI:456216"/>
        <dbReference type="EC" id="2.7.2.3"/>
    </reaction>
</comment>
<comment type="pathway">
    <text>Carbohydrate degradation; glycolysis; pyruvate from D-glyceraldehyde 3-phosphate: step 2/5.</text>
</comment>
<comment type="subunit">
    <text evidence="1">Monomer.</text>
</comment>
<comment type="subcellular location">
    <subcellularLocation>
        <location evidence="2">Cytoplasm</location>
    </subcellularLocation>
</comment>
<comment type="similarity">
    <text evidence="2">Belongs to the phosphoglycerate kinase family.</text>
</comment>
<organism>
    <name type="scientific">Streptococcus pyogenes serotype M1</name>
    <dbReference type="NCBI Taxonomy" id="301447"/>
    <lineage>
        <taxon>Bacteria</taxon>
        <taxon>Bacillati</taxon>
        <taxon>Bacillota</taxon>
        <taxon>Bacilli</taxon>
        <taxon>Lactobacillales</taxon>
        <taxon>Streptococcaceae</taxon>
        <taxon>Streptococcus</taxon>
    </lineage>
</organism>
<proteinExistence type="inferred from homology"/>
<name>PGK_STRP1</name>